<keyword id="KW-0002">3D-structure</keyword>
<keyword id="KW-1165">Clathrin-mediated endocytosis of virus by host</keyword>
<keyword id="KW-0165">Cleavage on pair of basic residues</keyword>
<keyword id="KW-0175">Coiled coil</keyword>
<keyword id="KW-1015">Disulfide bond</keyword>
<keyword id="KW-1170">Fusion of virus membrane with host endosomal membrane</keyword>
<keyword id="KW-1168">Fusion of virus membrane with host membrane</keyword>
<keyword id="KW-0325">Glycoprotein</keyword>
<keyword id="KW-1032">Host cell membrane</keyword>
<keyword id="KW-1043">Host membrane</keyword>
<keyword id="KW-0945">Host-virus interaction</keyword>
<keyword id="KW-1090">Inhibition of host innate immune response by virus</keyword>
<keyword id="KW-1084">Inhibition of host tetherin by virus</keyword>
<keyword id="KW-0449">Lipoprotein</keyword>
<keyword id="KW-0472">Membrane</keyword>
<keyword id="KW-0564">Palmitate</keyword>
<keyword id="KW-0691">RNA editing</keyword>
<keyword id="KW-0964">Secreted</keyword>
<keyword id="KW-0732">Signal</keyword>
<keyword id="KW-0812">Transmembrane</keyword>
<keyword id="KW-1133">Transmembrane helix</keyword>
<keyword id="KW-1161">Viral attachment to host cell</keyword>
<keyword id="KW-1234">Viral attachment to host entry receptor</keyword>
<keyword id="KW-0261">Viral envelope protein</keyword>
<keyword id="KW-0899">Viral immunoevasion</keyword>
<keyword id="KW-1162">Viral penetration into host cytoplasm</keyword>
<keyword id="KW-0946">Virion</keyword>
<keyword id="KW-1164">Virus endocytosis by host</keyword>
<keyword id="KW-1160">Virus entry into host cell</keyword>
<feature type="signal peptide" evidence="5">
    <location>
        <begin position="1"/>
        <end position="32"/>
    </location>
</feature>
<feature type="chain" id="PRO_0000316901" description="Envelope glycoprotein" evidence="1">
    <location>
        <begin position="33"/>
        <end position="676"/>
    </location>
</feature>
<feature type="chain" id="PRO_0000316902" description="GP1" evidence="1">
    <location>
        <begin position="33"/>
        <end position="501"/>
    </location>
</feature>
<feature type="chain" id="PRO_0000316903" description="GP2" evidence="1">
    <location>
        <begin position="502"/>
        <end position="676"/>
    </location>
</feature>
<feature type="chain" id="PRO_0000316904" description="Shed GP" evidence="1">
    <location>
        <begin position="502"/>
        <end position="637"/>
    </location>
</feature>
<feature type="topological domain" description="Extracellular" evidence="5">
    <location>
        <begin position="33"/>
        <end position="650"/>
    </location>
</feature>
<feature type="transmembrane region" description="Helical" evidence="5">
    <location>
        <begin position="651"/>
        <end position="671"/>
    </location>
</feature>
<feature type="topological domain" description="Cytoplasmic" evidence="5">
    <location>
        <begin position="672"/>
        <end position="676"/>
    </location>
</feature>
<feature type="region of interest" description="Receptor binding" evidence="5">
    <location>
        <begin position="33"/>
        <end position="185"/>
    </location>
</feature>
<feature type="region of interest" description="Mucin-like region" evidence="1">
    <location>
        <begin position="305"/>
        <end position="485"/>
    </location>
</feature>
<feature type="region of interest" description="Disordered" evidence="6">
    <location>
        <begin position="337"/>
        <end position="373"/>
    </location>
</feature>
<feature type="region of interest" description="Disordered" evidence="6">
    <location>
        <begin position="404"/>
        <end position="461"/>
    </location>
</feature>
<feature type="region of interest" description="Fusion peptide" evidence="1">
    <location>
        <begin position="524"/>
        <end position="539"/>
    </location>
</feature>
<feature type="coiled-coil region" evidence="5">
    <location>
        <begin position="554"/>
        <end position="595"/>
    </location>
</feature>
<feature type="coiled-coil region" evidence="5">
    <location>
        <begin position="615"/>
        <end position="634"/>
    </location>
</feature>
<feature type="compositionally biased region" description="Low complexity" evidence="6">
    <location>
        <begin position="405"/>
        <end position="428"/>
    </location>
</feature>
<feature type="compositionally biased region" description="Low complexity" evidence="6">
    <location>
        <begin position="449"/>
        <end position="461"/>
    </location>
</feature>
<feature type="site" description="Involved in receptor recognition and/or post-binding events" evidence="5">
    <location>
        <position position="57"/>
    </location>
</feature>
<feature type="site" description="Involved in receptor recognition and/or post-binding events" evidence="5">
    <location>
        <position position="63"/>
    </location>
</feature>
<feature type="site" description="Involved in receptor recognition and/or post-binding events" evidence="5">
    <location>
        <position position="88"/>
    </location>
</feature>
<feature type="site" description="Involved in receptor recognition and/or post-binding events" evidence="5">
    <location>
        <position position="95"/>
    </location>
</feature>
<feature type="site" description="Involved in receptor recognition and/or post-binding events" evidence="5">
    <location>
        <position position="170"/>
    </location>
</feature>
<feature type="site" description="Cleavage; by host furin" evidence="1">
    <location>
        <begin position="501"/>
        <end position="502"/>
    </location>
</feature>
<feature type="site" description="Cleavage; by host ADAM17" evidence="1">
    <location>
        <begin position="637"/>
        <end position="638"/>
    </location>
</feature>
<feature type="lipid moiety-binding region" description="S-palmitoyl cysteine; by host" evidence="3">
    <location>
        <position position="670"/>
    </location>
</feature>
<feature type="lipid moiety-binding region" description="S-palmitoyl cysteine; by host" evidence="3">
    <location>
        <position position="672"/>
    </location>
</feature>
<feature type="glycosylation site" description="N-linked (GlcNAc...) asparagine; by host" evidence="5">
    <location>
        <position position="40"/>
    </location>
</feature>
<feature type="glycosylation site" description="N-linked (GlcNAc...) asparagine; by host" evidence="5">
    <location>
        <position position="204"/>
    </location>
</feature>
<feature type="glycosylation site" description="N-linked (GlcNAc...) asparagine; by host" evidence="5">
    <location>
        <position position="208"/>
    </location>
</feature>
<feature type="glycosylation site" description="N-linked (GlcNAc...) asparagine; by host" evidence="5">
    <location>
        <position position="238"/>
    </location>
</feature>
<feature type="glycosylation site" description="N-linked (GlcNAc...) asparagine; by host" evidence="5">
    <location>
        <position position="257"/>
    </location>
</feature>
<feature type="glycosylation site" description="N-linked (GlcNAc...) asparagine; by host" evidence="5">
    <location>
        <position position="268"/>
    </location>
</feature>
<feature type="glycosylation site" description="N-linked (GlcNAc...) asparagine; by host" evidence="5">
    <location>
        <position position="296"/>
    </location>
</feature>
<feature type="glycosylation site" description="N-linked (GlcNAc...) asparagine; by host" evidence="5">
    <location>
        <position position="314"/>
    </location>
</feature>
<feature type="glycosylation site" description="N-linked (GlcNAc...) asparagine; by host" evidence="5">
    <location>
        <position position="366"/>
    </location>
</feature>
<feature type="glycosylation site" description="N-linked (GlcNAc...) asparagine; by host" evidence="5">
    <location>
        <position position="463"/>
    </location>
</feature>
<feature type="glycosylation site" description="N-linked (GlcNAc...) asparagine; by host" evidence="5">
    <location>
        <position position="563"/>
    </location>
</feature>
<feature type="glycosylation site" description="N-linked (GlcNAc...) asparagine; by host" evidence="5">
    <location>
        <position position="618"/>
    </location>
</feature>
<feature type="disulfide bond" description="Interchain (between GP1 and GP2 chains)" evidence="1">
    <location>
        <begin position="53"/>
        <end position="609"/>
    </location>
</feature>
<feature type="disulfide bond" evidence="5">
    <location>
        <begin position="108"/>
        <end position="135"/>
    </location>
</feature>
<feature type="disulfide bond" evidence="5">
    <location>
        <begin position="121"/>
        <end position="147"/>
    </location>
</feature>
<feature type="disulfide bond" evidence="5">
    <location>
        <begin position="511"/>
        <end position="556"/>
    </location>
</feature>
<feature type="disulfide bond" evidence="2">
    <location>
        <begin position="601"/>
        <end position="608"/>
    </location>
</feature>
<feature type="strand" evidence="8">
    <location>
        <begin position="35"/>
        <end position="39"/>
    </location>
</feature>
<feature type="strand" evidence="8">
    <location>
        <begin position="42"/>
        <end position="47"/>
    </location>
</feature>
<feature type="helix" evidence="8">
    <location>
        <begin position="60"/>
        <end position="62"/>
    </location>
</feature>
<feature type="strand" evidence="8">
    <location>
        <begin position="63"/>
        <end position="70"/>
    </location>
</feature>
<feature type="helix" evidence="8">
    <location>
        <begin position="71"/>
        <end position="73"/>
    </location>
</feature>
<feature type="helix" evidence="8">
    <location>
        <begin position="79"/>
        <end position="82"/>
    </location>
</feature>
<feature type="turn" evidence="8">
    <location>
        <begin position="83"/>
        <end position="85"/>
    </location>
</feature>
<feature type="strand" evidence="8">
    <location>
        <begin position="86"/>
        <end position="91"/>
    </location>
</feature>
<feature type="strand" evidence="8">
    <location>
        <begin position="96"/>
        <end position="98"/>
    </location>
</feature>
<feature type="strand" evidence="8">
    <location>
        <begin position="100"/>
        <end position="103"/>
    </location>
</feature>
<feature type="strand" evidence="8">
    <location>
        <begin position="105"/>
        <end position="111"/>
    </location>
</feature>
<feature type="strand" evidence="8">
    <location>
        <begin position="120"/>
        <end position="122"/>
    </location>
</feature>
<feature type="strand" evidence="8">
    <location>
        <begin position="135"/>
        <end position="141"/>
    </location>
</feature>
<feature type="strand" evidence="8">
    <location>
        <begin position="149"/>
        <end position="154"/>
    </location>
</feature>
<feature type="strand" evidence="8">
    <location>
        <begin position="159"/>
        <end position="161"/>
    </location>
</feature>
<feature type="strand" evidence="8">
    <location>
        <begin position="163"/>
        <end position="169"/>
    </location>
</feature>
<feature type="strand" evidence="8">
    <location>
        <begin position="176"/>
        <end position="186"/>
    </location>
</feature>
<feature type="strand" evidence="8">
    <location>
        <begin position="216"/>
        <end position="219"/>
    </location>
</feature>
<feature type="strand" evidence="8">
    <location>
        <begin position="225"/>
        <end position="229"/>
    </location>
</feature>
<feature type="strand" evidence="8">
    <location>
        <begin position="233"/>
        <end position="237"/>
    </location>
</feature>
<feature type="strand" evidence="8">
    <location>
        <begin position="240"/>
        <end position="243"/>
    </location>
</feature>
<feature type="helix" evidence="8">
    <location>
        <begin position="250"/>
        <end position="262"/>
    </location>
</feature>
<feature type="strand" evidence="8">
    <location>
        <begin position="515"/>
        <end position="519"/>
    </location>
</feature>
<feature type="turn" evidence="8">
    <location>
        <begin position="533"/>
        <end position="535"/>
    </location>
</feature>
<feature type="helix" evidence="8">
    <location>
        <begin position="539"/>
        <end position="541"/>
    </location>
</feature>
<feature type="strand" evidence="8">
    <location>
        <begin position="544"/>
        <end position="548"/>
    </location>
</feature>
<feature type="helix" evidence="8">
    <location>
        <begin position="552"/>
        <end position="575"/>
    </location>
</feature>
<feature type="strand" evidence="8">
    <location>
        <begin position="579"/>
        <end position="581"/>
    </location>
</feature>
<feature type="helix" evidence="8">
    <location>
        <begin position="584"/>
        <end position="597"/>
    </location>
</feature>
<dbReference type="EMBL" id="AY316199">
    <property type="protein sequence ID" value="AAP88031.1"/>
    <property type="molecule type" value="Genomic_RNA"/>
</dbReference>
<dbReference type="EMBL" id="AY344234">
    <property type="protein sequence ID" value="AAR11463.1"/>
    <property type="molecule type" value="Genomic_RNA"/>
</dbReference>
<dbReference type="EMBL" id="AY729654">
    <property type="protein sequence ID" value="AAU43887.1"/>
    <property type="molecule type" value="Genomic_RNA"/>
</dbReference>
<dbReference type="RefSeq" id="YP_138523.1">
    <property type="nucleotide sequence ID" value="NC_006432.1"/>
</dbReference>
<dbReference type="PDB" id="3S88">
    <property type="method" value="X-ray"/>
    <property type="resolution" value="3.35 A"/>
    <property type="chains" value="I=32-313, J=473-637"/>
</dbReference>
<dbReference type="PDB" id="9DZ2">
    <property type="method" value="EM"/>
    <property type="resolution" value="3.31 A"/>
    <property type="chains" value="A/E/I=1-195, B/F/J=509-637"/>
</dbReference>
<dbReference type="PDBsum" id="3S88"/>
<dbReference type="PDBsum" id="9DZ2"/>
<dbReference type="EMDB" id="EMD-47323"/>
<dbReference type="SMR" id="Q7T9D9"/>
<dbReference type="DIP" id="DIP-59447N"/>
<dbReference type="GlyCosmos" id="Q7T9D9">
    <property type="glycosylation" value="12 sites, No reported glycans"/>
</dbReference>
<dbReference type="ABCD" id="Q7T9D9">
    <property type="antibodies" value="3 sequenced antibodies"/>
</dbReference>
<dbReference type="DNASU" id="3160774"/>
<dbReference type="GeneID" id="3160774"/>
<dbReference type="KEGG" id="vg:3160774"/>
<dbReference type="EvolutionaryTrace" id="Q7T9D9"/>
<dbReference type="Proteomes" id="UP000000277">
    <property type="component" value="Segment"/>
</dbReference>
<dbReference type="GO" id="GO:0005576">
    <property type="term" value="C:extracellular region"/>
    <property type="evidence" value="ECO:0007669"/>
    <property type="project" value="UniProtKB-SubCell"/>
</dbReference>
<dbReference type="GO" id="GO:0020002">
    <property type="term" value="C:host cell plasma membrane"/>
    <property type="evidence" value="ECO:0007669"/>
    <property type="project" value="UniProtKB-SubCell"/>
</dbReference>
<dbReference type="GO" id="GO:0016020">
    <property type="term" value="C:membrane"/>
    <property type="evidence" value="ECO:0007669"/>
    <property type="project" value="UniProtKB-KW"/>
</dbReference>
<dbReference type="GO" id="GO:0019031">
    <property type="term" value="C:viral envelope"/>
    <property type="evidence" value="ECO:0007669"/>
    <property type="project" value="UniProtKB-KW"/>
</dbReference>
<dbReference type="GO" id="GO:0055036">
    <property type="term" value="C:virion membrane"/>
    <property type="evidence" value="ECO:0007669"/>
    <property type="project" value="UniProtKB-SubCell"/>
</dbReference>
<dbReference type="GO" id="GO:0075512">
    <property type="term" value="P:clathrin-dependent endocytosis of virus by host cell"/>
    <property type="evidence" value="ECO:0007669"/>
    <property type="project" value="UniProtKB-KW"/>
</dbReference>
<dbReference type="GO" id="GO:0098670">
    <property type="term" value="P:entry receptor-mediated virion attachment to host cell"/>
    <property type="evidence" value="ECO:0007669"/>
    <property type="project" value="UniProtKB-KW"/>
</dbReference>
<dbReference type="GO" id="GO:0039654">
    <property type="term" value="P:fusion of virus membrane with host endosome membrane"/>
    <property type="evidence" value="ECO:0007669"/>
    <property type="project" value="UniProtKB-KW"/>
</dbReference>
<dbReference type="GO" id="GO:0052170">
    <property type="term" value="P:symbiont-mediated suppression of host innate immune response"/>
    <property type="evidence" value="ECO:0007669"/>
    <property type="project" value="UniProtKB-KW"/>
</dbReference>
<dbReference type="GO" id="GO:0039587">
    <property type="term" value="P:symbiont-mediated-mediated suppression of host tetherin activity"/>
    <property type="evidence" value="ECO:0007669"/>
    <property type="project" value="UniProtKB-KW"/>
</dbReference>
<dbReference type="CDD" id="cd09850">
    <property type="entry name" value="Ebola-like_HR1-HR2"/>
    <property type="match status" value="1"/>
</dbReference>
<dbReference type="Gene3D" id="1.10.287.210">
    <property type="match status" value="1"/>
</dbReference>
<dbReference type="InterPro" id="IPR054584">
    <property type="entry name" value="Ebola-like_HR1-HR2"/>
</dbReference>
<dbReference type="InterPro" id="IPR014625">
    <property type="entry name" value="GPC_FiloV"/>
</dbReference>
<dbReference type="InterPro" id="IPR002561">
    <property type="entry name" value="GPC_filovir-type_extra_dom"/>
</dbReference>
<dbReference type="Pfam" id="PF22307">
    <property type="entry name" value="Ebola-like_HR1-HR2"/>
    <property type="match status" value="1"/>
</dbReference>
<dbReference type="Pfam" id="PF01611">
    <property type="entry name" value="Filo_glycop"/>
    <property type="match status" value="1"/>
</dbReference>
<dbReference type="PIRSF" id="PIRSF036874">
    <property type="entry name" value="GPC_FiloV"/>
    <property type="match status" value="1"/>
</dbReference>
<dbReference type="SUPFAM" id="SSF58069">
    <property type="entry name" value="Virus ectodomain"/>
    <property type="match status" value="1"/>
</dbReference>
<gene>
    <name type="primary">GP</name>
</gene>
<sequence length="676" mass="74594">MGGLSLLQLPRDKFRKSSFFVWVIILFQKAFSMPLGVVTNSTLEVTEIDQLVCKDHLASTDQLKSVGLNLEGSGVSTDIPSATKRWGFRSGVPPKVVSYEAGEWAENCYNLEIKKPDGSECLPPPPDGVRGFPRCRYVHKAQGTGPCPGDYAFHKDGAFFLYDRLASTVIYRGVNFAEGVIAFLILAKPKETFLQSPPIREAVNYTENTSSYYATSYLEYEIENFGAQHSTTLFKIDNNTFVRLDRPHTPQFLFQLNDTIHLHQQLSNTTGRLIWTLDANINADIGEWAFWENKKNLSEQLRGEELSFEALSLNETEDDDAASSRITKGRISDRATRKYSDLVPKNSPGMVPLHIPEGETTLPSQNSTEGRRVGVNTQETITETAATIIGTNGNHMQISTIGIRPSSSQIPSSSPTTAPSPEAQTPTTHTSGPSVMATEEPTTPPGSSPGPTTEAPTLTTPENITTAVKTVLPQESTSNGLITSTVTGILGSLGLRKRSRRQTNTKATGKCNPNLHYWTAQEQHNAAGIAWIPYFGPGAEGIYTEGLMHNQNALVCGLRQLANETTQALQLFLRATTELRTYTILNRKAIDFLLRRWGGTCRILGPDCCIEPHDWTKNITDKINQIIHDFIDNPLPNQDNDDNWWTGWRQWIPAGIGITGIIIAIIALLCVCKLLC</sequence>
<proteinExistence type="evidence at protein level"/>
<reference key="1">
    <citation type="journal article" date="2004" name="J. Virol.">
        <title>Analysis of human peripheral blood samples from fatal and nonfatal cases of Ebola (Sudan) hemorrhagic fever: cellular responses, virus load, and nitric oxide levels.</title>
        <authorList>
            <person name="Sanchez A."/>
            <person name="Lukwiya M."/>
            <person name="Bausch D."/>
            <person name="Mahanty S."/>
            <person name="Sanchez A.J."/>
            <person name="Wagoner K.D."/>
            <person name="Rollin P.E."/>
        </authorList>
    </citation>
    <scope>NUCLEOTIDE SEQUENCE [GENOMIC RNA]</scope>
</reference>
<reference key="2">
    <citation type="journal article" date="2004" name="J. Virol.">
        <title>Rapid diagnosis of Ebola hemorrhagic fever by reverse transcription-PCR in an outbreak setting and assessment of patient viral load as a predictor of outcome.</title>
        <authorList>
            <person name="Towner J.S."/>
            <person name="Rollin P.E."/>
            <person name="Bausch D.G."/>
            <person name="Sanchez A."/>
            <person name="Crary S.M."/>
            <person name="Vincent M."/>
            <person name="Lee W.F."/>
            <person name="Spiropoulou C.F."/>
            <person name="Ksiazek T.G."/>
            <person name="Lukwiya M."/>
            <person name="Kaducu F."/>
            <person name="Downing R."/>
            <person name="Nichol S.T."/>
        </authorList>
    </citation>
    <scope>NUCLEOTIDE SEQUENCE [GENOMIC RNA]</scope>
</reference>
<reference key="3">
    <citation type="journal article" date="2005" name="Virus Res.">
        <title>Complete genome sequence of an Ebola virus (Sudan species) responsible for a 2000 outbreak of human disease in Uganda.</title>
        <authorList>
            <person name="Sanchez A."/>
            <person name="Rollin P.E."/>
        </authorList>
    </citation>
    <scope>NUCLEOTIDE SEQUENCE [GENOMIC RNA]</scope>
</reference>
<organism>
    <name type="scientific">Sudan ebolavirus (strain Human/Uganda/Gulu/2000)</name>
    <name type="common">SEBOV</name>
    <name type="synonym">Sudan Ebola virus</name>
    <dbReference type="NCBI Taxonomy" id="386033"/>
    <lineage>
        <taxon>Viruses</taxon>
        <taxon>Riboviria</taxon>
        <taxon>Orthornavirae</taxon>
        <taxon>Negarnaviricota</taxon>
        <taxon>Haploviricotina</taxon>
        <taxon>Monjiviricetes</taxon>
        <taxon>Mononegavirales</taxon>
        <taxon>Filoviridae</taxon>
        <taxon>Orthoebolavirus</taxon>
        <taxon>Orthoebolavirus sudanense</taxon>
        <taxon>Sudan ebolavirus</taxon>
    </lineage>
</organism>
<organismHost>
    <name type="scientific">Epomops franqueti</name>
    <name type="common">Franquet's epauletted fruit bat</name>
    <name type="synonym">Epomophorus franqueti</name>
    <dbReference type="NCBI Taxonomy" id="77231"/>
</organismHost>
<organismHost>
    <name type="scientific">Homo sapiens</name>
    <name type="common">Human</name>
    <dbReference type="NCBI Taxonomy" id="9606"/>
</organismHost>
<organismHost>
    <name type="scientific">Myonycteris torquata</name>
    <name type="common">Little collared fruit bat</name>
    <dbReference type="NCBI Taxonomy" id="77243"/>
</organismHost>
<protein>
    <recommendedName>
        <fullName>Envelope glycoprotein</fullName>
    </recommendedName>
    <alternativeName>
        <fullName>GP1,2</fullName>
        <shortName>GP</shortName>
    </alternativeName>
    <component>
        <recommendedName>
            <fullName>GP1</fullName>
        </recommendedName>
    </component>
    <component>
        <recommendedName>
            <fullName>GP2</fullName>
        </recommendedName>
    </component>
    <component>
        <recommendedName>
            <fullName>Shed GP</fullName>
        </recommendedName>
        <alternativeName>
            <fullName>GP1,2-delta</fullName>
        </alternativeName>
    </component>
</protein>
<comment type="function">
    <molecule>Envelope glycoprotein</molecule>
    <text evidence="3">Trimeric GP1,2 complexes form the virion surface spikes and mediate the viral entry processes, with GP1 acting as the receptor-binding subunit and GP2 as the membrane fusion subunit. At later times of infection, down-regulates the expression of various host cell surface molecules that are essential for immune surveillance and cell adhesion. Down-modulates several integrins including ITGA1, ITGA2, ITGA3, ITGA4, ITGA5, ITGA6, ITGAV and ITGB1. This decrease in cell adhesion molecules may lead to cell detachment, contributing to the disruption of blood vessel integrity and hemorrhages developed during infection (cytotoxicity). Interacts with host TLR4 and thereby stimulates the differentiation and activation of monocytes leading to bystander death of T-lymphocytes. Down-regulates as well the function of host natural killer cells. Counteracts the antiviral effect of host BST2/tetherin that restricts release of progeny virions from infected cells. However, cooperates with VP40 and host BST2 to activate canonical NF-kappa-B pathway in a manner dependent on neddylation.</text>
</comment>
<comment type="function">
    <molecule>Shed GP</molecule>
    <text evidence="3">Functions as a decoy for anti-GP1,2 antibodies thereby contributing to viral immune evasion. Interacts and activates host macrophages and dendritic cells inducing up-regulation of cytokine transcription. This effect is mediated throught activation of host TLR4.</text>
</comment>
<comment type="function">
    <molecule>GP1</molecule>
    <text evidence="2 3 4">Responsible for binding to the receptor(s) on target cells. Interacts with CD209/DC-SIGN and CLEC4M/DC-SIGNR which act as cofactors for virus entry into dendritic cells (DCs) and endothelial cells (By similarity). Binding to the macrophage specific lectin CLEC10A also seems to enhance virus infectivity (By similarity). Interaction with FOLR1/folate receptor alpha may be a cofactor for virus entry in some cell types, although results are contradictory (By similarity). Members of the Tyro3 receptor tyrosine kinase family also seem to be cell entry factors in filovirus infection (By similarity). Once attached, the virions are internalized through clathrin-dependent endocytosis and/or macropinocytosis. After internalization of the virus into the endosomes of the host cell, proteolysis of GP1 by two cysteine proteases, CTSB/cathepsin B and CTSL/cathepsin L removes the glycan cap and allows GP1 binding to the host entry receptor NPC1. NPC1-binding, Ca(2+) and acidic pH induce a conformational change of GP2, which unmasks its fusion peptide and permit membranes fusion (By similarity).</text>
</comment>
<comment type="function">
    <molecule>GP2</molecule>
    <text evidence="3">Acts as a class I viral fusion protein. Under the current model, the protein has at least 3 conformational states: pre-fusion native state, pre-hairpin intermediate state, and post-fusion hairpin state. During viral and target cell membrane fusion, the coiled coil regions (heptad repeats) assume a trimer-of-hairpins structure, positioning the fusion peptide in close proximity to the C-terminal region of the ectodomain. The formation of this structure appears to drive apposition and subsequent fusion of viral and target cell membranes. Responsible for penetration of the virus into the cell cytoplasm by mediating the fusion of the membrane of the endocytosed virus particle with the endosomal membrane. Low pH in endosomes induces an irreversible conformational change in GP2, releasing the fusion hydrophobic peptide.</text>
</comment>
<comment type="subunit">
    <molecule>Envelope glycoprotein</molecule>
    <text evidence="3">Homotrimer; each monomer consists of a GP1 and a GP2 subunit linked by disulfide bonds. The resulting peplomers (GP1,2) protrude from the virus surface as spikes. Interacts with host integrin alpha-V/ITGAV. Interacts with host CLEC10A. Binds also to host CD209 and CLEC4M/DC-SIGN(R). Interacts with host FOLR1. Interacts with BST2; this interaction inhibits the antiviral effect of BST2 and this allows viral release from infected cells. Interacts with host FCN1; this interaction enhances viral entry. Interacts with host TLR4; this interaction induces cell death in T-lymphocytes or proinflammatory cytokines and SOCS1 production in monocytes.</text>
</comment>
<comment type="subunit">
    <molecule>GP1</molecule>
    <text evidence="3">Interacts with host entry receptor NPC1.</text>
</comment>
<comment type="subunit">
    <molecule>Shed GP</molecule>
    <text evidence="3">GP1 and GP2delta are part of GP1,2delta soluble complexes released by ectodomain shedding.</text>
</comment>
<comment type="subcellular location">
    <molecule>GP2</molecule>
    <subcellularLocation>
        <location evidence="3">Virion membrane</location>
        <topology evidence="5">Single-pass type I membrane protein</topology>
    </subcellularLocation>
    <subcellularLocation>
        <location evidence="3">Host cell membrane</location>
        <topology evidence="5">Single-pass type I membrane protein</topology>
    </subcellularLocation>
    <text evidence="3">In the cell, localizes to the plasma membrane lipid rafts, which probably represent the assembly and budding site.</text>
</comment>
<comment type="subcellular location">
    <molecule>GP1</molecule>
    <subcellularLocation>
        <location evidence="3">Virion membrane</location>
        <topology evidence="3">Peripheral membrane protein</topology>
    </subcellularLocation>
    <subcellularLocation>
        <location evidence="3">Host cell membrane</location>
        <topology evidence="3">Peripheral membrane protein</topology>
    </subcellularLocation>
    <text evidence="3">GP1 is not anchored to the viral envelope, but forms a disulfid-linked complex with the extravirion surface GP2. In the cell, both GP1 and GP2 localize to the plasma membrane lipid rafts, which probably represent the assembly and budding site. GP1 can also be shed after proteolytic processing.</text>
</comment>
<comment type="subcellular location">
    <molecule>Shed GP</molecule>
    <subcellularLocation>
        <location evidence="3">Secreted</location>
    </subcellularLocation>
    <text evidence="3">GP2-delta bound to GP1 (GP1,2-delta) is produced by proteolytic cleavage of GP1,2 by host ADAM17 and shed by the virus.</text>
</comment>
<comment type="domain">
    <text evidence="1">The mucin-like region seems to be involved in the cytotoxic function. This region is also involved in binding to human CLEC10A (By similarity).</text>
</comment>
<comment type="domain">
    <text evidence="1">The coiled coil regions play a role in oligomerization and fusion activity.</text>
</comment>
<comment type="PTM">
    <text evidence="1">N-glycosylated.</text>
</comment>
<comment type="PTM">
    <text evidence="1">O-glycosylated in the mucin-like region.</text>
</comment>
<comment type="PTM">
    <text evidence="1">Palmitoylation of GP2 is not required for its function.</text>
</comment>
<comment type="PTM">
    <text evidence="1">Specific enzymatic cleavages in vivo yield mature proteins. The precursor is processed into GP1 and GP2 by host cell furin in the trans Golgi, and maybe by other host proteases, to yield the mature GP1 and GP2 proteins. The cleavage site corresponds to the furin optimal cleavage sequence [KR]-X-[KR]-R. This cleavage does not seem to be required for function. After the internalization of the virus into cell endosomes, GP1 C-terminus is removed by the endosomal proteases cathepsin B, cathepsin L, or both, leaving a 19-kDa N-terminal fragment which is further digested by cathepsin B. Proteolytic processing of GP1,2 by host ADAM17 can remove the transmembrane anchor of GP2 and leads to shedding of complexes consisting in GP1 and truncated GP2 (GP1,2delta) (By similarity).</text>
</comment>
<comment type="RNA editing">
    <location>
        <position position="295"/>
    </location>
    <text>Partially edited. RNA editing at this position consists of an insertion of one or two adenine nucleotides. The sequence displayed here is the full-length transmembrane glycoprotein GP, derived from the +1A edited RNA. The unedited RNA gives rise to the small secreted glycoprotein sGP (AC Q7T9E0), the +2A edited RNA gives rise to the super small secreted glycoprotein ssGP (AC P0C772).</text>
</comment>
<comment type="miscellaneous">
    <text evidence="1">Filoviruses entry requires functional lipid rafts at the host cell surface.</text>
</comment>
<comment type="miscellaneous">
    <text>Essential for infectivity, as it is the sole viral protein expressed at the virion surface.</text>
</comment>
<comment type="similarity">
    <text evidence="7">Belongs to the filoviruses glycoprotein family.</text>
</comment>
<accession>Q7T9D9</accession>
<evidence type="ECO:0000250" key="1"/>
<evidence type="ECO:0000250" key="2">
    <source>
        <dbReference type="UniProtKB" id="O11457"/>
    </source>
</evidence>
<evidence type="ECO:0000250" key="3">
    <source>
        <dbReference type="UniProtKB" id="Q05320"/>
    </source>
</evidence>
<evidence type="ECO:0000250" key="4">
    <source>
        <dbReference type="UniProtKB" id="Q66814"/>
    </source>
</evidence>
<evidence type="ECO:0000255" key="5"/>
<evidence type="ECO:0000256" key="6">
    <source>
        <dbReference type="SAM" id="MobiDB-lite"/>
    </source>
</evidence>
<evidence type="ECO:0000305" key="7"/>
<evidence type="ECO:0007829" key="8">
    <source>
        <dbReference type="PDB" id="3S88"/>
    </source>
</evidence>
<name>VGP_EBOSU</name>